<protein>
    <recommendedName>
        <fullName evidence="1">Trp operon repressor</fullName>
    </recommendedName>
</protein>
<evidence type="ECO:0000255" key="1">
    <source>
        <dbReference type="HAMAP-Rule" id="MF_00475"/>
    </source>
</evidence>
<proteinExistence type="inferred from homology"/>
<name>TRPR_SHIB3</name>
<feature type="chain" id="PRO_1000197159" description="Trp operon repressor">
    <location>
        <begin position="1"/>
        <end position="108"/>
    </location>
</feature>
<feature type="DNA-binding region" evidence="1">
    <location>
        <begin position="68"/>
        <end position="91"/>
    </location>
</feature>
<sequence>MAQQSPYSAAMAEQRHQEWLRFVDLLKNAYQNDLHLPLLNLMLTPDEREALGTRVRIVEELLRGEMSQRELKNELGAGIATITRGSNSLKAAPVELRQWLEEVLLKSD</sequence>
<dbReference type="EMBL" id="CP001063">
    <property type="protein sequence ID" value="ACD06534.1"/>
    <property type="molecule type" value="Genomic_DNA"/>
</dbReference>
<dbReference type="RefSeq" id="WP_000068679.1">
    <property type="nucleotide sequence ID" value="NC_010658.1"/>
</dbReference>
<dbReference type="SMR" id="B2TZS6"/>
<dbReference type="STRING" id="344609.SbBS512_E4941"/>
<dbReference type="GeneID" id="93777452"/>
<dbReference type="KEGG" id="sbc:SbBS512_E4941"/>
<dbReference type="HOGENOM" id="CLU_147939_0_0_6"/>
<dbReference type="Proteomes" id="UP000001030">
    <property type="component" value="Chromosome"/>
</dbReference>
<dbReference type="GO" id="GO:0005737">
    <property type="term" value="C:cytoplasm"/>
    <property type="evidence" value="ECO:0007669"/>
    <property type="project" value="UniProtKB-SubCell"/>
</dbReference>
<dbReference type="GO" id="GO:0003700">
    <property type="term" value="F:DNA-binding transcription factor activity"/>
    <property type="evidence" value="ECO:0007669"/>
    <property type="project" value="InterPro"/>
</dbReference>
<dbReference type="GO" id="GO:0043565">
    <property type="term" value="F:sequence-specific DNA binding"/>
    <property type="evidence" value="ECO:0007669"/>
    <property type="project" value="InterPro"/>
</dbReference>
<dbReference type="GO" id="GO:0045892">
    <property type="term" value="P:negative regulation of DNA-templated transcription"/>
    <property type="evidence" value="ECO:0007669"/>
    <property type="project" value="UniProtKB-UniRule"/>
</dbReference>
<dbReference type="FunFam" id="1.10.1270.10:FF:000001">
    <property type="entry name" value="Trp operon repressor"/>
    <property type="match status" value="1"/>
</dbReference>
<dbReference type="Gene3D" id="1.10.1270.10">
    <property type="entry name" value="TrpR-like"/>
    <property type="match status" value="1"/>
</dbReference>
<dbReference type="HAMAP" id="MF_00475">
    <property type="entry name" value="Trp_repressor"/>
    <property type="match status" value="1"/>
</dbReference>
<dbReference type="InterPro" id="IPR000831">
    <property type="entry name" value="Trp_repress"/>
</dbReference>
<dbReference type="InterPro" id="IPR013335">
    <property type="entry name" value="Trp_repress_bac"/>
</dbReference>
<dbReference type="InterPro" id="IPR010921">
    <property type="entry name" value="Trp_repressor/repl_initiator"/>
</dbReference>
<dbReference type="InterPro" id="IPR038116">
    <property type="entry name" value="TrpR-like_sf"/>
</dbReference>
<dbReference type="NCBIfam" id="TIGR01321">
    <property type="entry name" value="TrpR"/>
    <property type="match status" value="1"/>
</dbReference>
<dbReference type="PANTHER" id="PTHR38025">
    <property type="entry name" value="TRP OPERON REPRESSOR"/>
    <property type="match status" value="1"/>
</dbReference>
<dbReference type="PANTHER" id="PTHR38025:SF1">
    <property type="entry name" value="TRP OPERON REPRESSOR"/>
    <property type="match status" value="1"/>
</dbReference>
<dbReference type="Pfam" id="PF01371">
    <property type="entry name" value="Trp_repressor"/>
    <property type="match status" value="1"/>
</dbReference>
<dbReference type="PIRSF" id="PIRSF003196">
    <property type="entry name" value="Trp_repressor"/>
    <property type="match status" value="1"/>
</dbReference>
<dbReference type="SUPFAM" id="SSF48295">
    <property type="entry name" value="TrpR-like"/>
    <property type="match status" value="1"/>
</dbReference>
<keyword id="KW-0963">Cytoplasm</keyword>
<keyword id="KW-0238">DNA-binding</keyword>
<keyword id="KW-1185">Reference proteome</keyword>
<keyword id="KW-0678">Repressor</keyword>
<keyword id="KW-0804">Transcription</keyword>
<keyword id="KW-0805">Transcription regulation</keyword>
<accession>B2TZS6</accession>
<organism>
    <name type="scientific">Shigella boydii serotype 18 (strain CDC 3083-94 / BS512)</name>
    <dbReference type="NCBI Taxonomy" id="344609"/>
    <lineage>
        <taxon>Bacteria</taxon>
        <taxon>Pseudomonadati</taxon>
        <taxon>Pseudomonadota</taxon>
        <taxon>Gammaproteobacteria</taxon>
        <taxon>Enterobacterales</taxon>
        <taxon>Enterobacteriaceae</taxon>
        <taxon>Shigella</taxon>
    </lineage>
</organism>
<comment type="function">
    <text evidence="1">This protein is an aporepressor. When complexed with L-tryptophan it binds the operator region of the trp operon (5'-ACTAGT-'3') and prevents the initiation of transcription. The complex also regulates trp repressor biosynthesis by binding to its regulatory region.</text>
</comment>
<comment type="subunit">
    <text evidence="1">Homodimer.</text>
</comment>
<comment type="subcellular location">
    <subcellularLocation>
        <location evidence="1">Cytoplasm</location>
    </subcellularLocation>
</comment>
<comment type="similarity">
    <text evidence="1">Belongs to the TrpR family.</text>
</comment>
<gene>
    <name evidence="1" type="primary">trpR</name>
    <name type="ordered locus">SbBS512_E4941</name>
</gene>
<reference key="1">
    <citation type="submission" date="2008-05" db="EMBL/GenBank/DDBJ databases">
        <title>Complete sequence of Shigella boydii serotype 18 strain BS512.</title>
        <authorList>
            <person name="Rasko D.A."/>
            <person name="Rosovitz M."/>
            <person name="Maurelli A.T."/>
            <person name="Myers G."/>
            <person name="Seshadri R."/>
            <person name="Cer R."/>
            <person name="Jiang L."/>
            <person name="Ravel J."/>
            <person name="Sebastian Y."/>
        </authorList>
    </citation>
    <scope>NUCLEOTIDE SEQUENCE [LARGE SCALE GENOMIC DNA]</scope>
    <source>
        <strain>CDC 3083-94 / BS512</strain>
    </source>
</reference>